<proteinExistence type="inferred from homology"/>
<sequence length="146" mass="16296">MKIYVDADACPVKDVIIFEATNAEIPVTLVTSFSHYSNAEQPKGVETIYVDSGADAADYRIMQLAKKEDLIVTQDYGLASLALAKGCIVLHHKGYKYTNDNIEQLLQTRYLSAMVRKSGKRTKGPKPFTAEDKEKFRALFKSMIAL</sequence>
<protein>
    <recommendedName>
        <fullName evidence="1">UPF0178 protein BC_3040</fullName>
    </recommendedName>
</protein>
<reference key="1">
    <citation type="journal article" date="2003" name="Nature">
        <title>Genome sequence of Bacillus cereus and comparative analysis with Bacillus anthracis.</title>
        <authorList>
            <person name="Ivanova N."/>
            <person name="Sorokin A."/>
            <person name="Anderson I."/>
            <person name="Galleron N."/>
            <person name="Candelon B."/>
            <person name="Kapatral V."/>
            <person name="Bhattacharyya A."/>
            <person name="Reznik G."/>
            <person name="Mikhailova N."/>
            <person name="Lapidus A."/>
            <person name="Chu L."/>
            <person name="Mazur M."/>
            <person name="Goltsman E."/>
            <person name="Larsen N."/>
            <person name="D'Souza M."/>
            <person name="Walunas T."/>
            <person name="Grechkin Y."/>
            <person name="Pusch G."/>
            <person name="Haselkorn R."/>
            <person name="Fonstein M."/>
            <person name="Ehrlich S.D."/>
            <person name="Overbeek R."/>
            <person name="Kyrpides N.C."/>
        </authorList>
    </citation>
    <scope>NUCLEOTIDE SEQUENCE [LARGE SCALE GENOMIC DNA]</scope>
    <source>
        <strain>ATCC 14579 / DSM 31 / CCUG 7414 / JCM 2152 / NBRC 15305 / NCIMB 9373 / NCTC 2599 / NRRL B-3711</strain>
    </source>
</reference>
<feature type="chain" id="PRO_0000175957" description="UPF0178 protein BC_3040">
    <location>
        <begin position="1"/>
        <end position="146"/>
    </location>
</feature>
<dbReference type="EMBL" id="AE016877">
    <property type="protein sequence ID" value="AAP09987.1"/>
    <property type="molecule type" value="Genomic_DNA"/>
</dbReference>
<dbReference type="RefSeq" id="NP_832786.1">
    <property type="nucleotide sequence ID" value="NC_004722.1"/>
</dbReference>
<dbReference type="RefSeq" id="WP_000708761.1">
    <property type="nucleotide sequence ID" value="NZ_CP138336.1"/>
</dbReference>
<dbReference type="STRING" id="226900.BC_3040"/>
<dbReference type="KEGG" id="bce:BC3040"/>
<dbReference type="PATRIC" id="fig|226900.8.peg.3116"/>
<dbReference type="HOGENOM" id="CLU_106619_0_0_9"/>
<dbReference type="OrthoDB" id="9798918at2"/>
<dbReference type="Proteomes" id="UP000001417">
    <property type="component" value="Chromosome"/>
</dbReference>
<dbReference type="HAMAP" id="MF_00489">
    <property type="entry name" value="UPF0178"/>
    <property type="match status" value="1"/>
</dbReference>
<dbReference type="InterPro" id="IPR003791">
    <property type="entry name" value="UPF0178"/>
</dbReference>
<dbReference type="NCBIfam" id="NF001095">
    <property type="entry name" value="PRK00124.1"/>
    <property type="match status" value="1"/>
</dbReference>
<dbReference type="PANTHER" id="PTHR35146">
    <property type="entry name" value="UPF0178 PROTEIN YAII"/>
    <property type="match status" value="1"/>
</dbReference>
<dbReference type="PANTHER" id="PTHR35146:SF1">
    <property type="entry name" value="UPF0178 PROTEIN YAII"/>
    <property type="match status" value="1"/>
</dbReference>
<dbReference type="Pfam" id="PF02639">
    <property type="entry name" value="DUF188"/>
    <property type="match status" value="1"/>
</dbReference>
<organism>
    <name type="scientific">Bacillus cereus (strain ATCC 14579 / DSM 31 / CCUG 7414 / JCM 2152 / NBRC 15305 / NCIMB 9373 / NCTC 2599 / NRRL B-3711)</name>
    <dbReference type="NCBI Taxonomy" id="226900"/>
    <lineage>
        <taxon>Bacteria</taxon>
        <taxon>Bacillati</taxon>
        <taxon>Bacillota</taxon>
        <taxon>Bacilli</taxon>
        <taxon>Bacillales</taxon>
        <taxon>Bacillaceae</taxon>
        <taxon>Bacillus</taxon>
        <taxon>Bacillus cereus group</taxon>
    </lineage>
</organism>
<accession>Q81BV3</accession>
<evidence type="ECO:0000255" key="1">
    <source>
        <dbReference type="HAMAP-Rule" id="MF_00489"/>
    </source>
</evidence>
<gene>
    <name type="ordered locus">BC_3040</name>
</gene>
<comment type="similarity">
    <text evidence="1">Belongs to the UPF0178 family.</text>
</comment>
<name>Y3040_BACCR</name>
<keyword id="KW-1185">Reference proteome</keyword>